<name>BGAL_SOLLC</name>
<dbReference type="EC" id="3.2.1.23"/>
<dbReference type="EMBL" id="X83854">
    <property type="protein sequence ID" value="CAA58734.1"/>
    <property type="molecule type" value="mRNA"/>
</dbReference>
<dbReference type="PIR" id="T06590">
    <property type="entry name" value="T06590"/>
</dbReference>
<dbReference type="RefSeq" id="NP_001234465.1">
    <property type="nucleotide sequence ID" value="NM_001247536.2"/>
</dbReference>
<dbReference type="SMR" id="P48980"/>
<dbReference type="FunCoup" id="P48980">
    <property type="interactions" value="360"/>
</dbReference>
<dbReference type="STRING" id="4081.P48980"/>
<dbReference type="CAZy" id="GH35">
    <property type="family name" value="Glycoside Hydrolase Family 35"/>
</dbReference>
<dbReference type="PaxDb" id="4081-Solyc12g044880.1.1"/>
<dbReference type="EnsemblPlants" id="Solyc12g044880.2.1">
    <property type="protein sequence ID" value="Solyc12g044880.2.1"/>
    <property type="gene ID" value="Solyc12g044880.2"/>
</dbReference>
<dbReference type="GeneID" id="544167"/>
<dbReference type="Gramene" id="Solyc12g044880.2.1">
    <property type="protein sequence ID" value="Solyc12g044880.2.1"/>
    <property type="gene ID" value="Solyc12g044880.2"/>
</dbReference>
<dbReference type="KEGG" id="sly:544167"/>
<dbReference type="eggNOG" id="KOG0496">
    <property type="taxonomic scope" value="Eukaryota"/>
</dbReference>
<dbReference type="HOGENOM" id="CLU_007853_4_0_1"/>
<dbReference type="InParanoid" id="P48980"/>
<dbReference type="OMA" id="SPSVEWV"/>
<dbReference type="OrthoDB" id="1657402at2759"/>
<dbReference type="PhylomeDB" id="P48980"/>
<dbReference type="Proteomes" id="UP000004994">
    <property type="component" value="Chromosome 12"/>
</dbReference>
<dbReference type="ExpressionAtlas" id="P48980">
    <property type="expression patterns" value="baseline and differential"/>
</dbReference>
<dbReference type="GO" id="GO:0009505">
    <property type="term" value="C:plant-type cell wall"/>
    <property type="evidence" value="ECO:0000318"/>
    <property type="project" value="GO_Central"/>
</dbReference>
<dbReference type="GO" id="GO:0005773">
    <property type="term" value="C:vacuole"/>
    <property type="evidence" value="ECO:0000318"/>
    <property type="project" value="GO_Central"/>
</dbReference>
<dbReference type="GO" id="GO:0004565">
    <property type="term" value="F:beta-galactosidase activity"/>
    <property type="evidence" value="ECO:0000318"/>
    <property type="project" value="GO_Central"/>
</dbReference>
<dbReference type="GO" id="GO:0030246">
    <property type="term" value="F:carbohydrate binding"/>
    <property type="evidence" value="ECO:0007669"/>
    <property type="project" value="InterPro"/>
</dbReference>
<dbReference type="GO" id="GO:0019388">
    <property type="term" value="P:galactose catabolic process"/>
    <property type="evidence" value="ECO:0000318"/>
    <property type="project" value="GO_Central"/>
</dbReference>
<dbReference type="GO" id="GO:0009827">
    <property type="term" value="P:plant-type cell wall modification"/>
    <property type="evidence" value="ECO:0000318"/>
    <property type="project" value="GO_Central"/>
</dbReference>
<dbReference type="CDD" id="cd22842">
    <property type="entry name" value="Gal_Rha_Lectin_BGal"/>
    <property type="match status" value="1"/>
</dbReference>
<dbReference type="FunFam" id="2.60.120.260:FF:000061">
    <property type="entry name" value="Beta-galactosidase"/>
    <property type="match status" value="1"/>
</dbReference>
<dbReference type="FunFam" id="2.60.120.260:FF:000076">
    <property type="entry name" value="Beta-galactosidase"/>
    <property type="match status" value="1"/>
</dbReference>
<dbReference type="FunFam" id="2.60.120.260:FF:000142">
    <property type="entry name" value="Beta-galactosidase"/>
    <property type="match status" value="1"/>
</dbReference>
<dbReference type="FunFam" id="2.60.120.740:FF:000002">
    <property type="entry name" value="Beta-galactosidase"/>
    <property type="match status" value="1"/>
</dbReference>
<dbReference type="FunFam" id="3.20.20.80:FF:000021">
    <property type="entry name" value="Beta-galactosidase"/>
    <property type="match status" value="1"/>
</dbReference>
<dbReference type="Gene3D" id="2.60.120.740">
    <property type="match status" value="1"/>
</dbReference>
<dbReference type="Gene3D" id="2.60.120.260">
    <property type="entry name" value="Galactose-binding domain-like"/>
    <property type="match status" value="2"/>
</dbReference>
<dbReference type="Gene3D" id="3.20.20.80">
    <property type="entry name" value="Glycosidases"/>
    <property type="match status" value="1"/>
</dbReference>
<dbReference type="InterPro" id="IPR048913">
    <property type="entry name" value="BetaGal_gal-bd"/>
</dbReference>
<dbReference type="InterPro" id="IPR008979">
    <property type="entry name" value="Galactose-bd-like_sf"/>
</dbReference>
<dbReference type="InterPro" id="IPR041392">
    <property type="entry name" value="GHD"/>
</dbReference>
<dbReference type="InterPro" id="IPR031330">
    <property type="entry name" value="Gly_Hdrlase_35_cat"/>
</dbReference>
<dbReference type="InterPro" id="IPR019801">
    <property type="entry name" value="Glyco_hydro_35_CS"/>
</dbReference>
<dbReference type="InterPro" id="IPR001944">
    <property type="entry name" value="Glycoside_Hdrlase_35"/>
</dbReference>
<dbReference type="InterPro" id="IPR017853">
    <property type="entry name" value="Glycoside_hydrolase_SF"/>
</dbReference>
<dbReference type="InterPro" id="IPR000922">
    <property type="entry name" value="Lectin_gal-bd_dom"/>
</dbReference>
<dbReference type="InterPro" id="IPR043159">
    <property type="entry name" value="Lectin_gal-bd_sf"/>
</dbReference>
<dbReference type="PANTHER" id="PTHR23421">
    <property type="entry name" value="BETA-GALACTOSIDASE RELATED"/>
    <property type="match status" value="1"/>
</dbReference>
<dbReference type="Pfam" id="PF21467">
    <property type="entry name" value="BetaGal_gal-bd"/>
    <property type="match status" value="2"/>
</dbReference>
<dbReference type="Pfam" id="PF17834">
    <property type="entry name" value="GHD"/>
    <property type="match status" value="1"/>
</dbReference>
<dbReference type="Pfam" id="PF01301">
    <property type="entry name" value="Glyco_hydro_35"/>
    <property type="match status" value="1"/>
</dbReference>
<dbReference type="Pfam" id="PF02140">
    <property type="entry name" value="SUEL_Lectin"/>
    <property type="match status" value="1"/>
</dbReference>
<dbReference type="PRINTS" id="PR00742">
    <property type="entry name" value="GLHYDRLASE35"/>
</dbReference>
<dbReference type="SUPFAM" id="SSF51445">
    <property type="entry name" value="(Trans)glycosidases"/>
    <property type="match status" value="1"/>
</dbReference>
<dbReference type="SUPFAM" id="SSF49785">
    <property type="entry name" value="Galactose-binding domain-like"/>
    <property type="match status" value="2"/>
</dbReference>
<dbReference type="PROSITE" id="PS01182">
    <property type="entry name" value="GLYCOSYL_HYDROL_F35"/>
    <property type="match status" value="1"/>
</dbReference>
<dbReference type="PROSITE" id="PS50228">
    <property type="entry name" value="SUEL_LECTIN"/>
    <property type="match status" value="1"/>
</dbReference>
<evidence type="ECO:0000255" key="1"/>
<evidence type="ECO:0000255" key="2">
    <source>
        <dbReference type="PROSITE-ProRule" id="PRU00260"/>
    </source>
</evidence>
<evidence type="ECO:0000305" key="3"/>
<keyword id="KW-0903">Direct protein sequencing</keyword>
<keyword id="KW-0326">Glycosidase</keyword>
<keyword id="KW-0378">Hydrolase</keyword>
<keyword id="KW-1185">Reference proteome</keyword>
<keyword id="KW-0732">Signal</keyword>
<reference key="1">
    <citation type="journal article" date="1995" name="Plant Physiol.">
        <title>Tomato exo-(1--&gt;4)-beta-D-galactanase. Isolation, changes during ripening in normal and mutant tomato fruit, and characterization of a related cDNA clone.</title>
        <authorList>
            <person name="Carey A.T."/>
            <person name="Holt K."/>
            <person name="Picard S."/>
            <person name="Wilde R."/>
            <person name="Tucker G.A."/>
            <person name="Bird C.R."/>
            <person name="Schuch W."/>
            <person name="Seymour G.B."/>
        </authorList>
    </citation>
    <scope>NUCLEOTIDE SEQUENCE [MRNA]</scope>
    <scope>PARTIAL PROTEIN SEQUENCE</scope>
    <source>
        <strain>cv. Ailsa Craig</strain>
        <tissue>Pericarp</tissue>
    </source>
</reference>
<organism>
    <name type="scientific">Solanum lycopersicum</name>
    <name type="common">Tomato</name>
    <name type="synonym">Lycopersicon esculentum</name>
    <dbReference type="NCBI Taxonomy" id="4081"/>
    <lineage>
        <taxon>Eukaryota</taxon>
        <taxon>Viridiplantae</taxon>
        <taxon>Streptophyta</taxon>
        <taxon>Embryophyta</taxon>
        <taxon>Tracheophyta</taxon>
        <taxon>Spermatophyta</taxon>
        <taxon>Magnoliopsida</taxon>
        <taxon>eudicotyledons</taxon>
        <taxon>Gunneridae</taxon>
        <taxon>Pentapetalae</taxon>
        <taxon>asterids</taxon>
        <taxon>lamiids</taxon>
        <taxon>Solanales</taxon>
        <taxon>Solanaceae</taxon>
        <taxon>Solanoideae</taxon>
        <taxon>Solaneae</taxon>
        <taxon>Solanum</taxon>
        <taxon>Solanum subgen. Lycopersicon</taxon>
    </lineage>
</organism>
<comment type="function">
    <text>Involved in cell wall degradation. Degrades polysaccharides containing beta-(1--&gt;4)-linked galactans, acting as an exo-(1--&gt;4)-beta-D-galactanase.</text>
</comment>
<comment type="catalytic activity">
    <reaction>
        <text>Hydrolysis of terminal non-reducing beta-D-galactose residues in beta-D-galactosides.</text>
        <dbReference type="EC" id="3.2.1.23"/>
    </reaction>
</comment>
<comment type="biophysicochemical properties">
    <phDependence>
        <text>Optimum pH is 4.5.</text>
    </phDependence>
</comment>
<comment type="similarity">
    <text evidence="3">Belongs to the glycosyl hydrolase 35 family.</text>
</comment>
<feature type="signal peptide">
    <location>
        <begin position="1"/>
        <end position="22"/>
    </location>
</feature>
<feature type="chain" id="PRO_0000012195" description="Beta-galactosidase">
    <location>
        <begin position="23"/>
        <end position="835"/>
    </location>
</feature>
<feature type="domain" description="SUEL-type lectin" evidence="2">
    <location>
        <begin position="749"/>
        <end position="835"/>
    </location>
</feature>
<feature type="active site" description="Proton donor" evidence="1">
    <location>
        <position position="180"/>
    </location>
</feature>
<feature type="active site" description="Nucleophile" evidence="1">
    <location>
        <position position="249"/>
    </location>
</feature>
<sequence>MGFWMAMLLMLLLCLWVSCGIASVSYDHKAIIVNGQRKILISGSIHYPRSTPEMWPDLIQKAKEGGVDVIQTYVFWNGHEPEEGKYYFEERYDLVKFIKVVQEAGLYVHLRIGPYACAEWNFGGFPVWLKYVPGISFRTNNEPFKAAMQKFTTKIVDMMKAEKLYETQGGPIILSQIENEYGPMEWELGEPGKVYSEWAAKMAVDLGTGVPWIMCKQDDVPDPIINTCNGFYCDYFTPNKANKPKMWTEAWTAWFTEFGGPVPYRPAEDMAFAVARFIQTGGSFINYYMYHGGTNFGRTSGGPFIATSYDYDAPLDEFGSLRQPKWGHLKDLHRAIKLCEPALVSVDPTVTSLGNYQEARVFKSESGACAAFLANYNQHSFAKVAFGNMHYNLPPWSISILPDCKNTVYNTARVGAQSAQMKMTPVSRGFSWESFNEDAASHEDDTFTVVGLLEQINITRDVSDYLWYMTDIEIDPTEGFLNSGNWPWLTVFSAGHALHVFVNGQLAGTVYGSLENPKLTFSNGINLRAGVNKISLLSIAVGLPNVGPHFETWNAGVLGPVSLNGLNEGTRDLTWQKWFYKVGLKGEALSLHSLSGSPSVEWVEGSLVAQKQPLSWYKTTFNAPDGNEPLALDMNTMGKGQVWINGQSLGRHWPAYKSSGSCSVCNYTGWFDEKKCLTNCGEGSQRWYHVPRSWLYPTGNLLVVFEEWGGDPYGITLVKREIGSVCADIYEWQPQLLNWQRLVSGKFDRPLRPKAHLKCAPGQKISSIKFASFGTPEGVCGNFQQGSCHAPRSYDAFKKNCVGKESCSVQVTPENFGGDPCRNVLKKLSVEAICS</sequence>
<protein>
    <recommendedName>
        <fullName>Beta-galactosidase</fullName>
        <ecNumber>3.2.1.23</ecNumber>
    </recommendedName>
    <alternativeName>
        <fullName>Acid beta-galactosidase</fullName>
        <shortName>Lactase</shortName>
    </alternativeName>
    <alternativeName>
        <fullName>Exo-(1--&gt;4)-beta-D-galactanase</fullName>
    </alternativeName>
</protein>
<accession>P48980</accession>
<proteinExistence type="evidence at protein level"/>